<organism>
    <name type="scientific">Gallus gallus</name>
    <name type="common">Chicken</name>
    <dbReference type="NCBI Taxonomy" id="9031"/>
    <lineage>
        <taxon>Eukaryota</taxon>
        <taxon>Metazoa</taxon>
        <taxon>Chordata</taxon>
        <taxon>Craniata</taxon>
        <taxon>Vertebrata</taxon>
        <taxon>Euteleostomi</taxon>
        <taxon>Archelosauria</taxon>
        <taxon>Archosauria</taxon>
        <taxon>Dinosauria</taxon>
        <taxon>Saurischia</taxon>
        <taxon>Theropoda</taxon>
        <taxon>Coelurosauria</taxon>
        <taxon>Aves</taxon>
        <taxon>Neognathae</taxon>
        <taxon>Galloanserae</taxon>
        <taxon>Galliformes</taxon>
        <taxon>Phasianidae</taxon>
        <taxon>Phasianinae</taxon>
        <taxon>Gallus</taxon>
    </lineage>
</organism>
<dbReference type="EMBL" id="AJ719295">
    <property type="protein sequence ID" value="CAG30954.1"/>
    <property type="molecule type" value="mRNA"/>
</dbReference>
<dbReference type="RefSeq" id="NP_001026137.1">
    <property type="nucleotide sequence ID" value="NM_001030966.1"/>
</dbReference>
<dbReference type="SMR" id="Q5ZMT9"/>
<dbReference type="FunCoup" id="Q5ZMT9">
    <property type="interactions" value="11"/>
</dbReference>
<dbReference type="STRING" id="9031.ENSGALP00000028029"/>
<dbReference type="PaxDb" id="9031-ENSGALP00000028029"/>
<dbReference type="GeneID" id="420442"/>
<dbReference type="KEGG" id="gga:420442"/>
<dbReference type="CTD" id="3638"/>
<dbReference type="VEuPathDB" id="HostDB:geneid_420442"/>
<dbReference type="eggNOG" id="KOG4363">
    <property type="taxonomic scope" value="Eukaryota"/>
</dbReference>
<dbReference type="InParanoid" id="Q5ZMT9"/>
<dbReference type="OrthoDB" id="205546at2759"/>
<dbReference type="PhylomeDB" id="Q5ZMT9"/>
<dbReference type="PRO" id="PR:Q5ZMT9"/>
<dbReference type="Proteomes" id="UP000000539">
    <property type="component" value="Chromosome 2"/>
</dbReference>
<dbReference type="Bgee" id="ENSGALG00000017394">
    <property type="expression patterns" value="Expressed in liver and 12 other cell types or tissues"/>
</dbReference>
<dbReference type="GO" id="GO:0005783">
    <property type="term" value="C:endoplasmic reticulum"/>
    <property type="evidence" value="ECO:0000318"/>
    <property type="project" value="GO_Central"/>
</dbReference>
<dbReference type="GO" id="GO:0032937">
    <property type="term" value="C:SREBP-SCAP-Insig complex"/>
    <property type="evidence" value="ECO:0000318"/>
    <property type="project" value="GO_Central"/>
</dbReference>
<dbReference type="GO" id="GO:0008142">
    <property type="term" value="F:oxysterol binding"/>
    <property type="evidence" value="ECO:0000250"/>
    <property type="project" value="UniProtKB"/>
</dbReference>
<dbReference type="GO" id="GO:0032869">
    <property type="term" value="P:cellular response to insulin stimulus"/>
    <property type="evidence" value="ECO:0000318"/>
    <property type="project" value="GO_Central"/>
</dbReference>
<dbReference type="GO" id="GO:0006695">
    <property type="term" value="P:cholesterol biosynthetic process"/>
    <property type="evidence" value="ECO:0000318"/>
    <property type="project" value="GO_Central"/>
</dbReference>
<dbReference type="GO" id="GO:0032933">
    <property type="term" value="P:SREBP signaling pathway"/>
    <property type="evidence" value="ECO:0000318"/>
    <property type="project" value="GO_Central"/>
</dbReference>
<dbReference type="GO" id="GO:0036316">
    <property type="term" value="P:SREBP-SCAP complex retention in endoplasmic reticulum"/>
    <property type="evidence" value="ECO:0000318"/>
    <property type="project" value="GO_Central"/>
</dbReference>
<dbReference type="InterPro" id="IPR025929">
    <property type="entry name" value="INSIG_fam"/>
</dbReference>
<dbReference type="PANTHER" id="PTHR15301">
    <property type="entry name" value="INSULIN-INDUCED GENE 1"/>
    <property type="match status" value="1"/>
</dbReference>
<dbReference type="PANTHER" id="PTHR15301:SF11">
    <property type="entry name" value="INSULIN-INDUCED GENE 1 PROTEIN"/>
    <property type="match status" value="1"/>
</dbReference>
<dbReference type="Pfam" id="PF07281">
    <property type="entry name" value="INSIG"/>
    <property type="match status" value="1"/>
</dbReference>
<sequence>MPRLESGAWSCSCAARARHAARPGEAAPKADAMQSPSPSAGRAEREASGGSATTWRQHLVQRSVVLFVVGAFMALVLNLLQIQRNVTLFPDEVIATLFSSAWWVPPCCGTAAAVVGLLYPCIDSHLGEPHKFKREWASVMRCIAVFVGINHASAKLDFANNVQLSLTLAALSLGLWWTFDRSRSGLGLGITIAFVATLITQFLVYNGVYQYTSPDFLYIRSWLPCIFFSGGVTVGNIGRQLAMGIPEKPHND</sequence>
<name>INSI1_CHICK</name>
<keyword id="KW-0153">Cholesterol metabolism</keyword>
<keyword id="KW-0256">Endoplasmic reticulum</keyword>
<keyword id="KW-0443">Lipid metabolism</keyword>
<keyword id="KW-0446">Lipid-binding</keyword>
<keyword id="KW-0472">Membrane</keyword>
<keyword id="KW-1185">Reference proteome</keyword>
<keyword id="KW-0753">Steroid metabolism</keyword>
<keyword id="KW-1207">Sterol metabolism</keyword>
<keyword id="KW-0812">Transmembrane</keyword>
<keyword id="KW-1133">Transmembrane helix</keyword>
<gene>
    <name evidence="2" type="primary">INSIG1</name>
    <name evidence="5" type="ORF">RCJMB04_1d1</name>
</gene>
<protein>
    <recommendedName>
        <fullName evidence="2">Insulin-induced gene 1 protein</fullName>
        <shortName evidence="2">INSIG-1</shortName>
    </recommendedName>
</protein>
<feature type="chain" id="PRO_0000287388" description="Insulin-induced gene 1 protein">
    <location>
        <begin position="1"/>
        <end position="252"/>
    </location>
</feature>
<feature type="topological domain" description="Cytoplasmic" evidence="2">
    <location>
        <begin position="1"/>
        <end position="59"/>
    </location>
</feature>
<feature type="transmembrane region" description="Helical; Name=1" evidence="1">
    <location>
        <begin position="60"/>
        <end position="82"/>
    </location>
</feature>
<feature type="topological domain" description="Extracellular" evidence="6">
    <location>
        <begin position="83"/>
        <end position="101"/>
    </location>
</feature>
<feature type="transmembrane region" description="Helical; Name=2" evidence="1">
    <location>
        <begin position="102"/>
        <end position="119"/>
    </location>
</feature>
<feature type="topological domain" description="Cytoplasmic" evidence="6">
    <location>
        <begin position="120"/>
        <end position="134"/>
    </location>
</feature>
<feature type="transmembrane region" description="Helical; Name=3" evidence="1">
    <location>
        <begin position="135"/>
        <end position="157"/>
    </location>
</feature>
<feature type="topological domain" description="Extracellular" evidence="6">
    <location>
        <begin position="158"/>
        <end position="160"/>
    </location>
</feature>
<feature type="transmembrane region" description="Helical; Name=4" evidence="1">
    <location>
        <begin position="161"/>
        <end position="179"/>
    </location>
</feature>
<feature type="topological domain" description="Cytoplasmic" evidence="2">
    <location>
        <begin position="180"/>
        <end position="184"/>
    </location>
</feature>
<feature type="transmembrane region" description="Helical; Name=5" evidence="1">
    <location>
        <begin position="185"/>
        <end position="206"/>
    </location>
</feature>
<feature type="topological domain" description="Extracellular" evidence="6">
    <location>
        <begin position="207"/>
        <end position="220"/>
    </location>
</feature>
<feature type="transmembrane region" description="Helical; Name=6" evidence="1">
    <location>
        <begin position="221"/>
        <end position="238"/>
    </location>
</feature>
<feature type="topological domain" description="Cytoplasmic" evidence="2">
    <location>
        <begin position="239"/>
        <end position="252"/>
    </location>
</feature>
<feature type="region of interest" description="Disordered" evidence="4">
    <location>
        <begin position="22"/>
        <end position="48"/>
    </location>
</feature>
<feature type="short sequence motif" description="KxHxx" evidence="2">
    <location>
        <begin position="246"/>
        <end position="252"/>
    </location>
</feature>
<feature type="site" description="Required for the recognition of 25-hydroxycholesterol" evidence="3">
    <location>
        <position position="146"/>
    </location>
</feature>
<reference key="1">
    <citation type="journal article" date="2005" name="Genome Biol.">
        <title>Full-length cDNAs from chicken bursal lymphocytes to facilitate gene function analysis.</title>
        <authorList>
            <person name="Caldwell R.B."/>
            <person name="Kierzek A.M."/>
            <person name="Arakawa H."/>
            <person name="Bezzubov Y."/>
            <person name="Zaim J."/>
            <person name="Fiedler P."/>
            <person name="Kutter S."/>
            <person name="Blagodatski A."/>
            <person name="Kostovska D."/>
            <person name="Koter M."/>
            <person name="Plachy J."/>
            <person name="Carninci P."/>
            <person name="Hayashizaki Y."/>
            <person name="Buerstedde J.-M."/>
        </authorList>
    </citation>
    <scope>NUCLEOTIDE SEQUENCE [LARGE SCALE MRNA]</scope>
    <source>
        <strain>CB</strain>
        <tissue>Bursa of Fabricius</tissue>
    </source>
</reference>
<accession>Q5ZMT9</accession>
<comment type="function">
    <text evidence="2">Oxysterol-binding protein that mediates feedback control of cholesterol synthesis by controlling both endoplasmic reticulum to Golgi transport of SCAP and degradation of HMGCR. Acts as a negative regulator of cholesterol biosynthesis by mediating the retention of the SCAP-SREBP complex in the endoplasmic reticulum, thereby blocking the processing of sterol regulatory element-binding proteins (SREBPs). Binds oxysterol, including 25-hydroxycholesterol, regulating interaction with SCAP and retention of the SCAP-SREBP complex in the endoplasmic reticulum. In presence of oxysterol, interacts with SCAP, retaining the SCAP-SREBP complex in the endoplasmic reticulum, thereby preventing SCAP from escorting SREBPs to the Golgi. Sterol deprivation reduces oxysterol-binding, disrupting the interaction between INSIG1 and SCAP, thereby promoting Golgi transport of the SCAP-SREBP complex, followed by processing and nuclear translocation of SREBPs. Also regulates cholesterol synthesis by regulating degradation of HMGCR.</text>
</comment>
<comment type="subunit">
    <text evidence="2">Interacts with SCAP; interaction is direct and only takes place in the presence of sterols; it prevents interaction between SCAP and the coat protein complex II (COPII). Associates with the SCAP-SREBP complex; association is mediated via its interaction with SCAP and only takes place in the presence of sterols.</text>
</comment>
<comment type="subcellular location">
    <subcellularLocation>
        <location evidence="2">Endoplasmic reticulum membrane</location>
        <topology evidence="2">Multi-pass membrane protein</topology>
    </subcellularLocation>
</comment>
<comment type="domain">
    <text evidence="2">The KxHxx motif mediates association with the coatomer complex.</text>
</comment>
<comment type="domain">
    <text evidence="3">Binds oxysterols in a pocket within their transmembrane domains and interacts with SCAP via transmembrane domains 3 and 4.</text>
</comment>
<comment type="similarity">
    <text evidence="6">Belongs to the INSIG family.</text>
</comment>
<evidence type="ECO:0000250" key="1">
    <source>
        <dbReference type="UniProtKB" id="A1T557"/>
    </source>
</evidence>
<evidence type="ECO:0000250" key="2">
    <source>
        <dbReference type="UniProtKB" id="O15503"/>
    </source>
</evidence>
<evidence type="ECO:0000250" key="3">
    <source>
        <dbReference type="UniProtKB" id="Q9Y5U4"/>
    </source>
</evidence>
<evidence type="ECO:0000256" key="4">
    <source>
        <dbReference type="SAM" id="MobiDB-lite"/>
    </source>
</evidence>
<evidence type="ECO:0000303" key="5">
    <source>
    </source>
</evidence>
<evidence type="ECO:0000305" key="6"/>
<proteinExistence type="evidence at transcript level"/>